<feature type="chain" id="PRO_1000125010" description="Nucleoside diphosphate kinase">
    <location>
        <begin position="1"/>
        <end position="143"/>
    </location>
</feature>
<feature type="active site" description="Pros-phosphohistidine intermediate" evidence="1">
    <location>
        <position position="117"/>
    </location>
</feature>
<feature type="binding site" evidence="1">
    <location>
        <position position="11"/>
    </location>
    <ligand>
        <name>ATP</name>
        <dbReference type="ChEBI" id="CHEBI:30616"/>
    </ligand>
</feature>
<feature type="binding site" evidence="1">
    <location>
        <position position="59"/>
    </location>
    <ligand>
        <name>ATP</name>
        <dbReference type="ChEBI" id="CHEBI:30616"/>
    </ligand>
</feature>
<feature type="binding site" evidence="1">
    <location>
        <position position="87"/>
    </location>
    <ligand>
        <name>ATP</name>
        <dbReference type="ChEBI" id="CHEBI:30616"/>
    </ligand>
</feature>
<feature type="binding site" evidence="1">
    <location>
        <position position="93"/>
    </location>
    <ligand>
        <name>ATP</name>
        <dbReference type="ChEBI" id="CHEBI:30616"/>
    </ligand>
</feature>
<feature type="binding site" evidence="1">
    <location>
        <position position="104"/>
    </location>
    <ligand>
        <name>ATP</name>
        <dbReference type="ChEBI" id="CHEBI:30616"/>
    </ligand>
</feature>
<feature type="binding site" evidence="1">
    <location>
        <position position="114"/>
    </location>
    <ligand>
        <name>ATP</name>
        <dbReference type="ChEBI" id="CHEBI:30616"/>
    </ligand>
</feature>
<protein>
    <recommendedName>
        <fullName evidence="1">Nucleoside diphosphate kinase</fullName>
        <shortName evidence="1">NDK</shortName>
        <shortName evidence="1">NDP kinase</shortName>
        <ecNumber evidence="1">2.7.4.6</ecNumber>
    </recommendedName>
    <alternativeName>
        <fullName evidence="1">Nucleoside-2-P kinase</fullName>
    </alternativeName>
</protein>
<organism>
    <name type="scientific">Salmonella dublin (strain CT_02021853)</name>
    <dbReference type="NCBI Taxonomy" id="439851"/>
    <lineage>
        <taxon>Bacteria</taxon>
        <taxon>Pseudomonadati</taxon>
        <taxon>Pseudomonadota</taxon>
        <taxon>Gammaproteobacteria</taxon>
        <taxon>Enterobacterales</taxon>
        <taxon>Enterobacteriaceae</taxon>
        <taxon>Salmonella</taxon>
    </lineage>
</organism>
<reference key="1">
    <citation type="journal article" date="2011" name="J. Bacteriol.">
        <title>Comparative genomics of 28 Salmonella enterica isolates: evidence for CRISPR-mediated adaptive sublineage evolution.</title>
        <authorList>
            <person name="Fricke W.F."/>
            <person name="Mammel M.K."/>
            <person name="McDermott P.F."/>
            <person name="Tartera C."/>
            <person name="White D.G."/>
            <person name="Leclerc J.E."/>
            <person name="Ravel J."/>
            <person name="Cebula T.A."/>
        </authorList>
    </citation>
    <scope>NUCLEOTIDE SEQUENCE [LARGE SCALE GENOMIC DNA]</scope>
    <source>
        <strain>CT_02021853</strain>
    </source>
</reference>
<gene>
    <name evidence="1" type="primary">ndk</name>
    <name type="ordered locus">SeD_A2896</name>
</gene>
<accession>B5FR67</accession>
<sequence length="143" mass="15522">MAIERTFSIIKPNAVAKNVIGSIFARFEAAGFKIVGTKMLHLTVEQARGFYAEHDGKPFFDGLVEFMTSGPIVVSVLESENAVQRHRDLLGATNPANALAGTLRADYADSLTENGTHGSDSLESAQREIAFFFGEGEVCPRTR</sequence>
<comment type="function">
    <text evidence="1">Major role in the synthesis of nucleoside triphosphates other than ATP. The ATP gamma phosphate is transferred to the NDP beta phosphate via a ping-pong mechanism, using a phosphorylated active-site intermediate.</text>
</comment>
<comment type="catalytic activity">
    <reaction evidence="1">
        <text>a 2'-deoxyribonucleoside 5'-diphosphate + ATP = a 2'-deoxyribonucleoside 5'-triphosphate + ADP</text>
        <dbReference type="Rhea" id="RHEA:44640"/>
        <dbReference type="ChEBI" id="CHEBI:30616"/>
        <dbReference type="ChEBI" id="CHEBI:61560"/>
        <dbReference type="ChEBI" id="CHEBI:73316"/>
        <dbReference type="ChEBI" id="CHEBI:456216"/>
        <dbReference type="EC" id="2.7.4.6"/>
    </reaction>
</comment>
<comment type="catalytic activity">
    <reaction evidence="1">
        <text>a ribonucleoside 5'-diphosphate + ATP = a ribonucleoside 5'-triphosphate + ADP</text>
        <dbReference type="Rhea" id="RHEA:18113"/>
        <dbReference type="ChEBI" id="CHEBI:30616"/>
        <dbReference type="ChEBI" id="CHEBI:57930"/>
        <dbReference type="ChEBI" id="CHEBI:61557"/>
        <dbReference type="ChEBI" id="CHEBI:456216"/>
        <dbReference type="EC" id="2.7.4.6"/>
    </reaction>
</comment>
<comment type="cofactor">
    <cofactor evidence="1">
        <name>Mg(2+)</name>
        <dbReference type="ChEBI" id="CHEBI:18420"/>
    </cofactor>
</comment>
<comment type="subunit">
    <text evidence="1">Homotetramer.</text>
</comment>
<comment type="subcellular location">
    <subcellularLocation>
        <location evidence="1">Cytoplasm</location>
    </subcellularLocation>
</comment>
<comment type="similarity">
    <text evidence="1">Belongs to the NDK family.</text>
</comment>
<dbReference type="EC" id="2.7.4.6" evidence="1"/>
<dbReference type="EMBL" id="CP001144">
    <property type="protein sequence ID" value="ACH76067.1"/>
    <property type="molecule type" value="Genomic_DNA"/>
</dbReference>
<dbReference type="RefSeq" id="WP_000963846.1">
    <property type="nucleotide sequence ID" value="NC_011205.1"/>
</dbReference>
<dbReference type="SMR" id="B5FR67"/>
<dbReference type="KEGG" id="sed:SeD_A2896"/>
<dbReference type="HOGENOM" id="CLU_060216_8_1_6"/>
<dbReference type="Proteomes" id="UP000008322">
    <property type="component" value="Chromosome"/>
</dbReference>
<dbReference type="GO" id="GO:0005737">
    <property type="term" value="C:cytoplasm"/>
    <property type="evidence" value="ECO:0007669"/>
    <property type="project" value="UniProtKB-SubCell"/>
</dbReference>
<dbReference type="GO" id="GO:0005524">
    <property type="term" value="F:ATP binding"/>
    <property type="evidence" value="ECO:0007669"/>
    <property type="project" value="UniProtKB-UniRule"/>
</dbReference>
<dbReference type="GO" id="GO:0046872">
    <property type="term" value="F:metal ion binding"/>
    <property type="evidence" value="ECO:0007669"/>
    <property type="project" value="UniProtKB-KW"/>
</dbReference>
<dbReference type="GO" id="GO:0004550">
    <property type="term" value="F:nucleoside diphosphate kinase activity"/>
    <property type="evidence" value="ECO:0007669"/>
    <property type="project" value="UniProtKB-UniRule"/>
</dbReference>
<dbReference type="GO" id="GO:0006241">
    <property type="term" value="P:CTP biosynthetic process"/>
    <property type="evidence" value="ECO:0007669"/>
    <property type="project" value="UniProtKB-UniRule"/>
</dbReference>
<dbReference type="GO" id="GO:0006183">
    <property type="term" value="P:GTP biosynthetic process"/>
    <property type="evidence" value="ECO:0007669"/>
    <property type="project" value="UniProtKB-UniRule"/>
</dbReference>
<dbReference type="GO" id="GO:0006228">
    <property type="term" value="P:UTP biosynthetic process"/>
    <property type="evidence" value="ECO:0007669"/>
    <property type="project" value="UniProtKB-UniRule"/>
</dbReference>
<dbReference type="CDD" id="cd04413">
    <property type="entry name" value="NDPk_I"/>
    <property type="match status" value="1"/>
</dbReference>
<dbReference type="FunFam" id="3.30.70.141:FF:000001">
    <property type="entry name" value="Nucleoside diphosphate kinase"/>
    <property type="match status" value="1"/>
</dbReference>
<dbReference type="Gene3D" id="3.30.70.141">
    <property type="entry name" value="Nucleoside diphosphate kinase-like domain"/>
    <property type="match status" value="1"/>
</dbReference>
<dbReference type="HAMAP" id="MF_00451">
    <property type="entry name" value="NDP_kinase"/>
    <property type="match status" value="1"/>
</dbReference>
<dbReference type="InterPro" id="IPR034907">
    <property type="entry name" value="NDK-like_dom"/>
</dbReference>
<dbReference type="InterPro" id="IPR036850">
    <property type="entry name" value="NDK-like_dom_sf"/>
</dbReference>
<dbReference type="InterPro" id="IPR001564">
    <property type="entry name" value="Nucleoside_diP_kinase"/>
</dbReference>
<dbReference type="InterPro" id="IPR023005">
    <property type="entry name" value="Nucleoside_diP_kinase_AS"/>
</dbReference>
<dbReference type="NCBIfam" id="NF001908">
    <property type="entry name" value="PRK00668.1"/>
    <property type="match status" value="1"/>
</dbReference>
<dbReference type="PANTHER" id="PTHR46161">
    <property type="entry name" value="NUCLEOSIDE DIPHOSPHATE KINASE"/>
    <property type="match status" value="1"/>
</dbReference>
<dbReference type="PANTHER" id="PTHR46161:SF3">
    <property type="entry name" value="NUCLEOSIDE DIPHOSPHATE KINASE DDB_G0292928-RELATED"/>
    <property type="match status" value="1"/>
</dbReference>
<dbReference type="Pfam" id="PF00334">
    <property type="entry name" value="NDK"/>
    <property type="match status" value="1"/>
</dbReference>
<dbReference type="PRINTS" id="PR01243">
    <property type="entry name" value="NUCDPKINASE"/>
</dbReference>
<dbReference type="SMART" id="SM00562">
    <property type="entry name" value="NDK"/>
    <property type="match status" value="1"/>
</dbReference>
<dbReference type="SUPFAM" id="SSF54919">
    <property type="entry name" value="Nucleoside diphosphate kinase, NDK"/>
    <property type="match status" value="1"/>
</dbReference>
<dbReference type="PROSITE" id="PS00469">
    <property type="entry name" value="NDPK"/>
    <property type="match status" value="1"/>
</dbReference>
<dbReference type="PROSITE" id="PS51374">
    <property type="entry name" value="NDPK_LIKE"/>
    <property type="match status" value="1"/>
</dbReference>
<proteinExistence type="inferred from homology"/>
<keyword id="KW-0067">ATP-binding</keyword>
<keyword id="KW-0963">Cytoplasm</keyword>
<keyword id="KW-0418">Kinase</keyword>
<keyword id="KW-0460">Magnesium</keyword>
<keyword id="KW-0479">Metal-binding</keyword>
<keyword id="KW-0546">Nucleotide metabolism</keyword>
<keyword id="KW-0547">Nucleotide-binding</keyword>
<keyword id="KW-0597">Phosphoprotein</keyword>
<keyword id="KW-0808">Transferase</keyword>
<evidence type="ECO:0000255" key="1">
    <source>
        <dbReference type="HAMAP-Rule" id="MF_00451"/>
    </source>
</evidence>
<name>NDK_SALDC</name>